<organism>
    <name type="scientific">Bacillus thuringiensis subsp. konkukian (strain 97-27)</name>
    <dbReference type="NCBI Taxonomy" id="281309"/>
    <lineage>
        <taxon>Bacteria</taxon>
        <taxon>Bacillati</taxon>
        <taxon>Bacillota</taxon>
        <taxon>Bacilli</taxon>
        <taxon>Bacillales</taxon>
        <taxon>Bacillaceae</taxon>
        <taxon>Bacillus</taxon>
        <taxon>Bacillus cereus group</taxon>
    </lineage>
</organism>
<reference key="1">
    <citation type="journal article" date="2006" name="J. Bacteriol.">
        <title>Pathogenomic sequence analysis of Bacillus cereus and Bacillus thuringiensis isolates closely related to Bacillus anthracis.</title>
        <authorList>
            <person name="Han C.S."/>
            <person name="Xie G."/>
            <person name="Challacombe J.F."/>
            <person name="Altherr M.R."/>
            <person name="Bhotika S.S."/>
            <person name="Bruce D."/>
            <person name="Campbell C.S."/>
            <person name="Campbell M.L."/>
            <person name="Chen J."/>
            <person name="Chertkov O."/>
            <person name="Cleland C."/>
            <person name="Dimitrijevic M."/>
            <person name="Doggett N.A."/>
            <person name="Fawcett J.J."/>
            <person name="Glavina T."/>
            <person name="Goodwin L.A."/>
            <person name="Hill K.K."/>
            <person name="Hitchcock P."/>
            <person name="Jackson P.J."/>
            <person name="Keim P."/>
            <person name="Kewalramani A.R."/>
            <person name="Longmire J."/>
            <person name="Lucas S."/>
            <person name="Malfatti S."/>
            <person name="McMurry K."/>
            <person name="Meincke L.J."/>
            <person name="Misra M."/>
            <person name="Moseman B.L."/>
            <person name="Mundt M."/>
            <person name="Munk A.C."/>
            <person name="Okinaka R.T."/>
            <person name="Parson-Quintana B."/>
            <person name="Reilly L.P."/>
            <person name="Richardson P."/>
            <person name="Robinson D.L."/>
            <person name="Rubin E."/>
            <person name="Saunders E."/>
            <person name="Tapia R."/>
            <person name="Tesmer J.G."/>
            <person name="Thayer N."/>
            <person name="Thompson L.S."/>
            <person name="Tice H."/>
            <person name="Ticknor L.O."/>
            <person name="Wills P.L."/>
            <person name="Brettin T.S."/>
            <person name="Gilna P."/>
        </authorList>
    </citation>
    <scope>NUCLEOTIDE SEQUENCE [LARGE SCALE GENOMIC DNA]</scope>
    <source>
        <strain>97-27</strain>
    </source>
</reference>
<dbReference type="EC" id="2.4.1.227" evidence="1"/>
<dbReference type="EMBL" id="AE017355">
    <property type="protein sequence ID" value="AAT61602.1"/>
    <property type="status" value="ALT_INIT"/>
    <property type="molecule type" value="Genomic_DNA"/>
</dbReference>
<dbReference type="RefSeq" id="WP_011181833.1">
    <property type="nucleotide sequence ID" value="NC_005957.1"/>
</dbReference>
<dbReference type="RefSeq" id="YP_037972.2">
    <property type="nucleotide sequence ID" value="NC_005957.1"/>
</dbReference>
<dbReference type="SMR" id="Q6HEQ4"/>
<dbReference type="CAZy" id="GT28">
    <property type="family name" value="Glycosyltransferase Family 28"/>
</dbReference>
<dbReference type="KEGG" id="btk:BT9727_3652"/>
<dbReference type="PATRIC" id="fig|281309.8.peg.3891"/>
<dbReference type="HOGENOM" id="CLU_037404_0_1_9"/>
<dbReference type="UniPathway" id="UPA00219"/>
<dbReference type="Proteomes" id="UP000001301">
    <property type="component" value="Chromosome"/>
</dbReference>
<dbReference type="GO" id="GO:0005886">
    <property type="term" value="C:plasma membrane"/>
    <property type="evidence" value="ECO:0007669"/>
    <property type="project" value="UniProtKB-SubCell"/>
</dbReference>
<dbReference type="GO" id="GO:0051991">
    <property type="term" value="F:UDP-N-acetyl-D-glucosamine:N-acetylmuramoyl-L-alanyl-D-glutamyl-meso-2,6-diaminopimelyl-D-alanyl-D-alanine-diphosphoundecaprenol 4-beta-N-acetylglucosaminlytransferase activity"/>
    <property type="evidence" value="ECO:0007669"/>
    <property type="project" value="RHEA"/>
</dbReference>
<dbReference type="GO" id="GO:0050511">
    <property type="term" value="F:undecaprenyldiphospho-muramoylpentapeptide beta-N-acetylglucosaminyltransferase activity"/>
    <property type="evidence" value="ECO:0007669"/>
    <property type="project" value="UniProtKB-UniRule"/>
</dbReference>
<dbReference type="GO" id="GO:0005975">
    <property type="term" value="P:carbohydrate metabolic process"/>
    <property type="evidence" value="ECO:0007669"/>
    <property type="project" value="InterPro"/>
</dbReference>
<dbReference type="GO" id="GO:0051301">
    <property type="term" value="P:cell division"/>
    <property type="evidence" value="ECO:0007669"/>
    <property type="project" value="UniProtKB-KW"/>
</dbReference>
<dbReference type="GO" id="GO:0071555">
    <property type="term" value="P:cell wall organization"/>
    <property type="evidence" value="ECO:0007669"/>
    <property type="project" value="UniProtKB-KW"/>
</dbReference>
<dbReference type="GO" id="GO:0030259">
    <property type="term" value="P:lipid glycosylation"/>
    <property type="evidence" value="ECO:0007669"/>
    <property type="project" value="UniProtKB-UniRule"/>
</dbReference>
<dbReference type="GO" id="GO:0009252">
    <property type="term" value="P:peptidoglycan biosynthetic process"/>
    <property type="evidence" value="ECO:0007669"/>
    <property type="project" value="UniProtKB-UniRule"/>
</dbReference>
<dbReference type="GO" id="GO:0008360">
    <property type="term" value="P:regulation of cell shape"/>
    <property type="evidence" value="ECO:0007669"/>
    <property type="project" value="UniProtKB-KW"/>
</dbReference>
<dbReference type="CDD" id="cd03785">
    <property type="entry name" value="GT28_MurG"/>
    <property type="match status" value="1"/>
</dbReference>
<dbReference type="Gene3D" id="3.40.50.2000">
    <property type="entry name" value="Glycogen Phosphorylase B"/>
    <property type="match status" value="2"/>
</dbReference>
<dbReference type="HAMAP" id="MF_00033">
    <property type="entry name" value="MurG"/>
    <property type="match status" value="1"/>
</dbReference>
<dbReference type="InterPro" id="IPR006009">
    <property type="entry name" value="GlcNAc_MurG"/>
</dbReference>
<dbReference type="InterPro" id="IPR007235">
    <property type="entry name" value="Glyco_trans_28_C"/>
</dbReference>
<dbReference type="InterPro" id="IPR004276">
    <property type="entry name" value="GlycoTrans_28_N"/>
</dbReference>
<dbReference type="NCBIfam" id="TIGR01133">
    <property type="entry name" value="murG"/>
    <property type="match status" value="1"/>
</dbReference>
<dbReference type="PANTHER" id="PTHR21015:SF22">
    <property type="entry name" value="GLYCOSYLTRANSFERASE"/>
    <property type="match status" value="1"/>
</dbReference>
<dbReference type="PANTHER" id="PTHR21015">
    <property type="entry name" value="UDP-N-ACETYLGLUCOSAMINE--N-ACETYLMURAMYL-(PENTAPEPTIDE) PYROPHOSPHORYL-UNDECAPRENOL N-ACETYLGLUCOSAMINE TRANSFERASE 1"/>
    <property type="match status" value="1"/>
</dbReference>
<dbReference type="Pfam" id="PF04101">
    <property type="entry name" value="Glyco_tran_28_C"/>
    <property type="match status" value="1"/>
</dbReference>
<dbReference type="Pfam" id="PF03033">
    <property type="entry name" value="Glyco_transf_28"/>
    <property type="match status" value="1"/>
</dbReference>
<dbReference type="SUPFAM" id="SSF53756">
    <property type="entry name" value="UDP-Glycosyltransferase/glycogen phosphorylase"/>
    <property type="match status" value="1"/>
</dbReference>
<sequence length="364" mass="39630">MRVLVSGGGTGGHIYPALALIREIKKLNPEARFLYIGTENGLESTIVPKTGIPFQSIVISGFKRKISLDNVKTVMRFLKGVQDSKRYIRRFNPDIVIGTGGYVCGPVVYAAAKLGIPTIVHEQNSVPGVTNKFLSRYVDKVAVCFEAAAEHFPQSKVVMTGNPRASEVMDQNGMKGKRSVGLSLPKKSVLIFGGSRGARPINDAFVEAIEQFGNKSYEILYVTGEVHYDKVMEAVKQKGNPNNVIIKPFIHNMPEVLTGVDLVVSRAGATTLAELTALGKPSVLIPSPYVTNNHQEKNARSVVDKGAAKMLLEKDLTAETLIRDIDEILLDAQTLQNMKLAAGQLGIPDAANKLYEVMNKLVKK</sequence>
<name>MURG1_BACHK</name>
<accession>Q6HEQ4</accession>
<gene>
    <name evidence="1" type="primary">murG1</name>
    <name type="ordered locus">BT9727_3652</name>
</gene>
<feature type="chain" id="PRO_0000225027" description="UDP-N-acetylglucosamine--N-acetylmuramyl-(pentapeptide) pyrophosphoryl-undecaprenol N-acetylglucosamine transferase 1">
    <location>
        <begin position="1"/>
        <end position="364"/>
    </location>
</feature>
<feature type="binding site" evidence="1">
    <location>
        <begin position="10"/>
        <end position="12"/>
    </location>
    <ligand>
        <name>UDP-N-acetyl-alpha-D-glucosamine</name>
        <dbReference type="ChEBI" id="CHEBI:57705"/>
    </ligand>
</feature>
<feature type="binding site" evidence="1">
    <location>
        <position position="124"/>
    </location>
    <ligand>
        <name>UDP-N-acetyl-alpha-D-glucosamine</name>
        <dbReference type="ChEBI" id="CHEBI:57705"/>
    </ligand>
</feature>
<feature type="binding site" evidence="1">
    <location>
        <position position="195"/>
    </location>
    <ligand>
        <name>UDP-N-acetyl-alpha-D-glucosamine</name>
        <dbReference type="ChEBI" id="CHEBI:57705"/>
    </ligand>
</feature>
<feature type="binding site" evidence="1">
    <location>
        <position position="250"/>
    </location>
    <ligand>
        <name>UDP-N-acetyl-alpha-D-glucosamine</name>
        <dbReference type="ChEBI" id="CHEBI:57705"/>
    </ligand>
</feature>
<feature type="binding site" evidence="1">
    <location>
        <position position="295"/>
    </location>
    <ligand>
        <name>UDP-N-acetyl-alpha-D-glucosamine</name>
        <dbReference type="ChEBI" id="CHEBI:57705"/>
    </ligand>
</feature>
<protein>
    <recommendedName>
        <fullName evidence="1">UDP-N-acetylglucosamine--N-acetylmuramyl-(pentapeptide) pyrophosphoryl-undecaprenol N-acetylglucosamine transferase 1</fullName>
        <ecNumber evidence="1">2.4.1.227</ecNumber>
    </recommendedName>
    <alternativeName>
        <fullName evidence="1">Undecaprenyl-PP-MurNAc-pentapeptide-UDPGlcNAc GlcNAc transferase 1</fullName>
    </alternativeName>
</protein>
<evidence type="ECO:0000255" key="1">
    <source>
        <dbReference type="HAMAP-Rule" id="MF_00033"/>
    </source>
</evidence>
<evidence type="ECO:0000305" key="2"/>
<keyword id="KW-0131">Cell cycle</keyword>
<keyword id="KW-0132">Cell division</keyword>
<keyword id="KW-1003">Cell membrane</keyword>
<keyword id="KW-0133">Cell shape</keyword>
<keyword id="KW-0961">Cell wall biogenesis/degradation</keyword>
<keyword id="KW-0328">Glycosyltransferase</keyword>
<keyword id="KW-0472">Membrane</keyword>
<keyword id="KW-0573">Peptidoglycan synthesis</keyword>
<keyword id="KW-0808">Transferase</keyword>
<comment type="function">
    <text evidence="1">Cell wall formation. Catalyzes the transfer of a GlcNAc subunit on undecaprenyl-pyrophosphoryl-MurNAc-pentapeptide (lipid intermediate I) to form undecaprenyl-pyrophosphoryl-MurNAc-(pentapeptide)GlcNAc (lipid intermediate II).</text>
</comment>
<comment type="catalytic activity">
    <reaction evidence="1">
        <text>di-trans,octa-cis-undecaprenyl diphospho-N-acetyl-alpha-D-muramoyl-L-alanyl-D-glutamyl-meso-2,6-diaminopimeloyl-D-alanyl-D-alanine + UDP-N-acetyl-alpha-D-glucosamine = di-trans,octa-cis-undecaprenyl diphospho-[N-acetyl-alpha-D-glucosaminyl-(1-&gt;4)]-N-acetyl-alpha-D-muramoyl-L-alanyl-D-glutamyl-meso-2,6-diaminopimeloyl-D-alanyl-D-alanine + UDP + H(+)</text>
        <dbReference type="Rhea" id="RHEA:31227"/>
        <dbReference type="ChEBI" id="CHEBI:15378"/>
        <dbReference type="ChEBI" id="CHEBI:57705"/>
        <dbReference type="ChEBI" id="CHEBI:58223"/>
        <dbReference type="ChEBI" id="CHEBI:61387"/>
        <dbReference type="ChEBI" id="CHEBI:61388"/>
        <dbReference type="EC" id="2.4.1.227"/>
    </reaction>
</comment>
<comment type="pathway">
    <text evidence="1">Cell wall biogenesis; peptidoglycan biosynthesis.</text>
</comment>
<comment type="subcellular location">
    <subcellularLocation>
        <location evidence="1">Cell membrane</location>
        <topology evidence="1">Peripheral membrane protein</topology>
        <orientation evidence="1">Cytoplasmic side</orientation>
    </subcellularLocation>
</comment>
<comment type="similarity">
    <text evidence="1">Belongs to the glycosyltransferase 28 family. MurG subfamily.</text>
</comment>
<comment type="sequence caution" evidence="2">
    <conflict type="erroneous initiation">
        <sequence resource="EMBL-CDS" id="AAT61602"/>
    </conflict>
</comment>
<proteinExistence type="inferred from homology"/>